<name>TRPB_PSEU2</name>
<dbReference type="EC" id="4.2.1.20" evidence="1"/>
<dbReference type="EMBL" id="CP000075">
    <property type="protein sequence ID" value="AAY35108.1"/>
    <property type="molecule type" value="Genomic_DNA"/>
</dbReference>
<dbReference type="RefSeq" id="WP_003401519.1">
    <property type="nucleotide sequence ID" value="NC_007005.1"/>
</dbReference>
<dbReference type="RefSeq" id="YP_233146.1">
    <property type="nucleotide sequence ID" value="NC_007005.1"/>
</dbReference>
<dbReference type="SMR" id="Q500R4"/>
<dbReference type="STRING" id="205918.Psyr_0034"/>
<dbReference type="KEGG" id="psb:Psyr_0034"/>
<dbReference type="PATRIC" id="fig|205918.7.peg.33"/>
<dbReference type="eggNOG" id="COG0133">
    <property type="taxonomic scope" value="Bacteria"/>
</dbReference>
<dbReference type="HOGENOM" id="CLU_016734_3_1_6"/>
<dbReference type="OrthoDB" id="9766131at2"/>
<dbReference type="UniPathway" id="UPA00035">
    <property type="reaction ID" value="UER00044"/>
</dbReference>
<dbReference type="Proteomes" id="UP000000426">
    <property type="component" value="Chromosome"/>
</dbReference>
<dbReference type="GO" id="GO:0005737">
    <property type="term" value="C:cytoplasm"/>
    <property type="evidence" value="ECO:0007669"/>
    <property type="project" value="TreeGrafter"/>
</dbReference>
<dbReference type="GO" id="GO:0004834">
    <property type="term" value="F:tryptophan synthase activity"/>
    <property type="evidence" value="ECO:0007669"/>
    <property type="project" value="UniProtKB-UniRule"/>
</dbReference>
<dbReference type="CDD" id="cd06446">
    <property type="entry name" value="Trp-synth_B"/>
    <property type="match status" value="1"/>
</dbReference>
<dbReference type="FunFam" id="3.40.50.1100:FF:000001">
    <property type="entry name" value="Tryptophan synthase beta chain"/>
    <property type="match status" value="1"/>
</dbReference>
<dbReference type="FunFam" id="3.40.50.1100:FF:000004">
    <property type="entry name" value="Tryptophan synthase beta chain"/>
    <property type="match status" value="1"/>
</dbReference>
<dbReference type="Gene3D" id="3.40.50.1100">
    <property type="match status" value="2"/>
</dbReference>
<dbReference type="HAMAP" id="MF_00133">
    <property type="entry name" value="Trp_synth_beta"/>
    <property type="match status" value="1"/>
</dbReference>
<dbReference type="InterPro" id="IPR006653">
    <property type="entry name" value="Trp_synth_b_CS"/>
</dbReference>
<dbReference type="InterPro" id="IPR006654">
    <property type="entry name" value="Trp_synth_beta"/>
</dbReference>
<dbReference type="InterPro" id="IPR023026">
    <property type="entry name" value="Trp_synth_beta/beta-like"/>
</dbReference>
<dbReference type="InterPro" id="IPR001926">
    <property type="entry name" value="TrpB-like_PALP"/>
</dbReference>
<dbReference type="InterPro" id="IPR036052">
    <property type="entry name" value="TrpB-like_PALP_sf"/>
</dbReference>
<dbReference type="NCBIfam" id="TIGR00263">
    <property type="entry name" value="trpB"/>
    <property type="match status" value="1"/>
</dbReference>
<dbReference type="PANTHER" id="PTHR48077:SF3">
    <property type="entry name" value="TRYPTOPHAN SYNTHASE"/>
    <property type="match status" value="1"/>
</dbReference>
<dbReference type="PANTHER" id="PTHR48077">
    <property type="entry name" value="TRYPTOPHAN SYNTHASE-RELATED"/>
    <property type="match status" value="1"/>
</dbReference>
<dbReference type="Pfam" id="PF00291">
    <property type="entry name" value="PALP"/>
    <property type="match status" value="1"/>
</dbReference>
<dbReference type="PIRSF" id="PIRSF001413">
    <property type="entry name" value="Trp_syn_beta"/>
    <property type="match status" value="1"/>
</dbReference>
<dbReference type="SUPFAM" id="SSF53686">
    <property type="entry name" value="Tryptophan synthase beta subunit-like PLP-dependent enzymes"/>
    <property type="match status" value="1"/>
</dbReference>
<dbReference type="PROSITE" id="PS00168">
    <property type="entry name" value="TRP_SYNTHASE_BETA"/>
    <property type="match status" value="1"/>
</dbReference>
<evidence type="ECO:0000255" key="1">
    <source>
        <dbReference type="HAMAP-Rule" id="MF_00133"/>
    </source>
</evidence>
<gene>
    <name evidence="1" type="primary">trpB</name>
    <name type="ordered locus">Psyr_0034</name>
</gene>
<proteinExistence type="inferred from homology"/>
<accession>Q500R4</accession>
<reference key="1">
    <citation type="journal article" date="2005" name="Proc. Natl. Acad. Sci. U.S.A.">
        <title>Comparison of the complete genome sequences of Pseudomonas syringae pv. syringae B728a and pv. tomato DC3000.</title>
        <authorList>
            <person name="Feil H."/>
            <person name="Feil W.S."/>
            <person name="Chain P."/>
            <person name="Larimer F."/>
            <person name="Dibartolo G."/>
            <person name="Copeland A."/>
            <person name="Lykidis A."/>
            <person name="Trong S."/>
            <person name="Nolan M."/>
            <person name="Goltsman E."/>
            <person name="Thiel J."/>
            <person name="Malfatti S."/>
            <person name="Loper J.E."/>
            <person name="Lapidus A."/>
            <person name="Detter J.C."/>
            <person name="Land M."/>
            <person name="Richardson P.M."/>
            <person name="Kyrpides N.C."/>
            <person name="Ivanova N."/>
            <person name="Lindow S.E."/>
        </authorList>
    </citation>
    <scope>NUCLEOTIDE SEQUENCE [LARGE SCALE GENOMIC DNA]</scope>
    <source>
        <strain>B728a</strain>
    </source>
</reference>
<sequence length="409" mass="44452">MTQTNFRSGPDANGLFGSFGGRYVAETLMPLVLDLNREYEAAKADPEFIKEMAYFQRDYVGRPNPLYFAERLTEFCGGAKIYFKREELNHTGAHKINNCIGQVLLAKRMGKKRLIAETGAGMHGVATATVAARFGLPCVIYMGATDIERQQANVFRMRLLGAEIVPVTSGTGTLKDAMNEALRDWVTNVDDTFYLIGTVAGPHPYPAMVRDFQAIIGKETKEQMLEKEGRLPDSLVACVGGGSNAMGLFHPFLDDASVEIIGVEAGGHGVSTDKHAASLNGGVPGVLHGNRTYLLQDGDGQITDAHSISAGLDYPGIGPEHAFLHEVKRVEYVSITDDEALDAFHQCCLLEGIIPALETAHALAEAMKRATNLRDDHLMVVCLSGRGDKDMQTVMNHMAAAEHTQEQLV</sequence>
<protein>
    <recommendedName>
        <fullName evidence="1">Tryptophan synthase beta chain</fullName>
        <ecNumber evidence="1">4.2.1.20</ecNumber>
    </recommendedName>
</protein>
<comment type="function">
    <text evidence="1">The beta subunit is responsible for the synthesis of L-tryptophan from indole and L-serine.</text>
</comment>
<comment type="catalytic activity">
    <reaction evidence="1">
        <text>(1S,2R)-1-C-(indol-3-yl)glycerol 3-phosphate + L-serine = D-glyceraldehyde 3-phosphate + L-tryptophan + H2O</text>
        <dbReference type="Rhea" id="RHEA:10532"/>
        <dbReference type="ChEBI" id="CHEBI:15377"/>
        <dbReference type="ChEBI" id="CHEBI:33384"/>
        <dbReference type="ChEBI" id="CHEBI:57912"/>
        <dbReference type="ChEBI" id="CHEBI:58866"/>
        <dbReference type="ChEBI" id="CHEBI:59776"/>
        <dbReference type="EC" id="4.2.1.20"/>
    </reaction>
</comment>
<comment type="cofactor">
    <cofactor evidence="1">
        <name>pyridoxal 5'-phosphate</name>
        <dbReference type="ChEBI" id="CHEBI:597326"/>
    </cofactor>
</comment>
<comment type="pathway">
    <text evidence="1">Amino-acid biosynthesis; L-tryptophan biosynthesis; L-tryptophan from chorismate: step 5/5.</text>
</comment>
<comment type="subunit">
    <text evidence="1">Tetramer of two alpha and two beta chains.</text>
</comment>
<comment type="similarity">
    <text evidence="1">Belongs to the TrpB family.</text>
</comment>
<keyword id="KW-0028">Amino-acid biosynthesis</keyword>
<keyword id="KW-0057">Aromatic amino acid biosynthesis</keyword>
<keyword id="KW-0456">Lyase</keyword>
<keyword id="KW-0663">Pyridoxal phosphate</keyword>
<keyword id="KW-0822">Tryptophan biosynthesis</keyword>
<organism>
    <name type="scientific">Pseudomonas syringae pv. syringae (strain B728a)</name>
    <dbReference type="NCBI Taxonomy" id="205918"/>
    <lineage>
        <taxon>Bacteria</taxon>
        <taxon>Pseudomonadati</taxon>
        <taxon>Pseudomonadota</taxon>
        <taxon>Gammaproteobacteria</taxon>
        <taxon>Pseudomonadales</taxon>
        <taxon>Pseudomonadaceae</taxon>
        <taxon>Pseudomonas</taxon>
        <taxon>Pseudomonas syringae</taxon>
    </lineage>
</organism>
<feature type="chain" id="PRO_1000018379" description="Tryptophan synthase beta chain">
    <location>
        <begin position="1"/>
        <end position="409"/>
    </location>
</feature>
<feature type="modified residue" description="N6-(pyridoxal phosphate)lysine" evidence="1">
    <location>
        <position position="95"/>
    </location>
</feature>